<sequence length="52" mass="5946">MGKQAEFWSESKNNSKIDGQPKAKSRFASKRPNGTINTHPQERMRAANQQEE</sequence>
<reference key="1">
    <citation type="submission" date="2008-10" db="EMBL/GenBank/DDBJ databases">
        <title>Genome sequence of Bacillus cereus G9842.</title>
        <authorList>
            <person name="Dodson R.J."/>
            <person name="Durkin A.S."/>
            <person name="Rosovitz M.J."/>
            <person name="Rasko D.A."/>
            <person name="Hoffmaster A."/>
            <person name="Ravel J."/>
            <person name="Sutton G."/>
        </authorList>
    </citation>
    <scope>NUCLEOTIDE SEQUENCE [LARGE SCALE GENOMIC DNA]</scope>
    <source>
        <strain>G9842</strain>
    </source>
</reference>
<comment type="subcellular location">
    <subcellularLocation>
        <location evidence="1">Spore core</location>
    </subcellularLocation>
</comment>
<comment type="induction">
    <text evidence="1">Expressed only in the forespore compartment of sporulating cells.</text>
</comment>
<comment type="similarity">
    <text evidence="1">Belongs to the SspK family.</text>
</comment>
<dbReference type="EMBL" id="CP001186">
    <property type="protein sequence ID" value="ACK93678.1"/>
    <property type="molecule type" value="Genomic_DNA"/>
</dbReference>
<dbReference type="RefSeq" id="WP_000517891.1">
    <property type="nucleotide sequence ID" value="NC_011772.1"/>
</dbReference>
<dbReference type="KEGG" id="bcg:BCG9842_B4802"/>
<dbReference type="HOGENOM" id="CLU_3076423_0_0_9"/>
<dbReference type="Proteomes" id="UP000006744">
    <property type="component" value="Chromosome"/>
</dbReference>
<dbReference type="GO" id="GO:0042601">
    <property type="term" value="C:endospore-forming forespore"/>
    <property type="evidence" value="ECO:0007669"/>
    <property type="project" value="InterPro"/>
</dbReference>
<dbReference type="GO" id="GO:0030436">
    <property type="term" value="P:asexual sporulation"/>
    <property type="evidence" value="ECO:0007669"/>
    <property type="project" value="UniProtKB-UniRule"/>
</dbReference>
<dbReference type="GO" id="GO:0030435">
    <property type="term" value="P:sporulation resulting in formation of a cellular spore"/>
    <property type="evidence" value="ECO:0007669"/>
    <property type="project" value="UniProtKB-KW"/>
</dbReference>
<dbReference type="HAMAP" id="MF_01504">
    <property type="entry name" value="SspK"/>
    <property type="match status" value="1"/>
</dbReference>
<dbReference type="InterPro" id="IPR012611">
    <property type="entry name" value="SASP_SspK"/>
</dbReference>
<dbReference type="NCBIfam" id="NF002843">
    <property type="entry name" value="PRK03081.1"/>
    <property type="match status" value="1"/>
</dbReference>
<dbReference type="NCBIfam" id="TIGR03091">
    <property type="entry name" value="SASP_sspK"/>
    <property type="match status" value="1"/>
</dbReference>
<dbReference type="Pfam" id="PF08176">
    <property type="entry name" value="SspK"/>
    <property type="match status" value="1"/>
</dbReference>
<organism>
    <name type="scientific">Bacillus cereus (strain G9842)</name>
    <dbReference type="NCBI Taxonomy" id="405531"/>
    <lineage>
        <taxon>Bacteria</taxon>
        <taxon>Bacillati</taxon>
        <taxon>Bacillota</taxon>
        <taxon>Bacilli</taxon>
        <taxon>Bacillales</taxon>
        <taxon>Bacillaceae</taxon>
        <taxon>Bacillus</taxon>
        <taxon>Bacillus cereus group</taxon>
    </lineage>
</organism>
<keyword id="KW-0749">Sporulation</keyword>
<proteinExistence type="inferred from homology"/>
<feature type="chain" id="PRO_1000196547" description="Small, acid-soluble spore protein K">
    <location>
        <begin position="1"/>
        <end position="52"/>
    </location>
</feature>
<feature type="region of interest" description="Disordered" evidence="2">
    <location>
        <begin position="1"/>
        <end position="52"/>
    </location>
</feature>
<accession>B7IW10</accession>
<evidence type="ECO:0000255" key="1">
    <source>
        <dbReference type="HAMAP-Rule" id="MF_01504"/>
    </source>
</evidence>
<evidence type="ECO:0000256" key="2">
    <source>
        <dbReference type="SAM" id="MobiDB-lite"/>
    </source>
</evidence>
<name>SSPK_BACC2</name>
<gene>
    <name evidence="1" type="primary">sspK</name>
    <name type="ordered locus">BCG9842_B4802</name>
</gene>
<protein>
    <recommendedName>
        <fullName evidence="1">Small, acid-soluble spore protein K</fullName>
        <shortName evidence="1">SASP K</shortName>
    </recommendedName>
</protein>